<proteinExistence type="evidence at protein level"/>
<name>JBP1_TRYBB</name>
<keyword id="KW-0223">Dioxygenase</keyword>
<keyword id="KW-0238">DNA-binding</keyword>
<keyword id="KW-0408">Iron</keyword>
<keyword id="KW-0479">Metal-binding</keyword>
<keyword id="KW-0539">Nucleus</keyword>
<keyword id="KW-0560">Oxidoreductase</keyword>
<accession>P86937</accession>
<accession>Q382H3</accession>
<accession>Q9U6M3</accession>
<reference key="1">
    <citation type="journal article" date="1999" name="EMBO J.">
        <title>The modified base J is the target for a novel DNA-binding protein in kinetoplastid protozoans.</title>
        <authorList>
            <person name="Cross M."/>
            <person name="Kieft R."/>
            <person name="Sabatini R."/>
            <person name="Wilm M."/>
            <person name="de Kort M."/>
            <person name="van der Marel G.A."/>
            <person name="van Boom J.H."/>
            <person name="van Leeuwen F."/>
            <person name="Borst P."/>
        </authorList>
    </citation>
    <scope>NUCLEOTIDE SEQUENCE [GENOMIC DNA]</scope>
    <scope>DNA-BINDING</scope>
    <source>
        <strain>427</strain>
    </source>
</reference>
<reference key="2">
    <citation type="journal article" date="2005" name="Mol. Cell">
        <title>Regulation of trypanosome DNA glycosylation by a SWI2/SNF2-like protein.</title>
        <authorList>
            <person name="DiPaolo C."/>
            <person name="Kieft R."/>
            <person name="Cross M."/>
            <person name="Sabatini R."/>
        </authorList>
    </citation>
    <scope>FUNCTION</scope>
    <scope>SUBCELLULAR LOCATION</scope>
    <scope>DOMAIN</scope>
    <scope>DEVELOPMENTAL STAGE</scope>
    <source>
        <strain>29-13</strain>
        <strain>427</strain>
    </source>
</reference>
<reference key="3">
    <citation type="journal article" date="2009" name="Nucleic Acids Res.">
        <title>JBP1 and JBP2 are two distinct thymidine hydroxylases involved in J biosynthesis in genomic DNA of African trypanosomes.</title>
        <authorList>
            <person name="Cliffe L.J."/>
            <person name="Kieft R."/>
            <person name="Southern T."/>
            <person name="Birkeland S.R."/>
            <person name="Marshall M."/>
            <person name="Sweeney K."/>
            <person name="Sabatini R."/>
        </authorList>
    </citation>
    <scope>DISRUPTION PHENOTYPE</scope>
    <source>
        <strain>29-13</strain>
        <strain>427</strain>
    </source>
</reference>
<dbReference type="EC" id="1.14.11.6" evidence="2"/>
<dbReference type="EMBL" id="AF182399">
    <property type="protein sequence ID" value="AAF01741.1"/>
    <property type="molecule type" value="Genomic_DNA"/>
</dbReference>
<dbReference type="SMR" id="P86937"/>
<dbReference type="GO" id="GO:0005634">
    <property type="term" value="C:nucleus"/>
    <property type="evidence" value="ECO:0000314"/>
    <property type="project" value="UniProtKB"/>
</dbReference>
<dbReference type="GO" id="GO:0003677">
    <property type="term" value="F:DNA binding"/>
    <property type="evidence" value="ECO:0000314"/>
    <property type="project" value="UniProtKB"/>
</dbReference>
<dbReference type="GO" id="GO:0046872">
    <property type="term" value="F:metal ion binding"/>
    <property type="evidence" value="ECO:0007669"/>
    <property type="project" value="UniProtKB-KW"/>
</dbReference>
<dbReference type="GO" id="GO:0050341">
    <property type="term" value="F:thymine dioxygenase activity"/>
    <property type="evidence" value="ECO:0000304"/>
    <property type="project" value="UniProtKB"/>
</dbReference>
<dbReference type="GO" id="GO:0070580">
    <property type="term" value="P:base J metabolic process"/>
    <property type="evidence" value="ECO:0000315"/>
    <property type="project" value="UniProtKB"/>
</dbReference>
<dbReference type="CDD" id="cd20332">
    <property type="entry name" value="JBP"/>
    <property type="match status" value="1"/>
</dbReference>
<dbReference type="Gene3D" id="3.60.130.30">
    <property type="match status" value="1"/>
</dbReference>
<dbReference type="Gene3D" id="1.20.120.1440">
    <property type="entry name" value="JBP1, DNA-binding domain"/>
    <property type="match status" value="1"/>
</dbReference>
<dbReference type="InterPro" id="IPR024779">
    <property type="entry name" value="2OGFeDO_JBP1/TET_oxygenase_dom"/>
</dbReference>
<dbReference type="InterPro" id="IPR041241">
    <property type="entry name" value="DB_JBP1"/>
</dbReference>
<dbReference type="InterPro" id="IPR043111">
    <property type="entry name" value="DB_JBP1_sf"/>
</dbReference>
<dbReference type="Pfam" id="PF18526">
    <property type="entry name" value="DB_JBP1"/>
    <property type="match status" value="1"/>
</dbReference>
<dbReference type="Pfam" id="PF12851">
    <property type="entry name" value="Tet_JBP"/>
    <property type="match status" value="1"/>
</dbReference>
<protein>
    <recommendedName>
        <fullName>Thymine dioxygenase JBP1</fullName>
        <ecNumber evidence="2">1.14.11.6</ecNumber>
    </recommendedName>
    <alternativeName>
        <fullName>J-binding protein 1</fullName>
    </alternativeName>
    <alternativeName>
        <fullName>Thymidine hydroxylase JBP1</fullName>
    </alternativeName>
</protein>
<gene>
    <name type="primary">JBP1</name>
</gene>
<comment type="function">
    <text evidence="3">Dioxygenase that catalyzes the first step of DNA base J (beta-d-glucosyl-HOMedU) biosynthesis by converting thymine to 5-hydroxymethyluracil (HOMedU). DNA base J is a hypermodified thymidine residue found in the genome of kinetoplastid parasites, which is localized primarily to repetitive DNA, namely the telomeres, and is implicated in the regulation of antigenic variation. Also specifically binds to base J-containing DNA (J-DNA). Involved in propagation and maintenance of DNA base J synthesis initiated by JBP2 by specifically binding already synthesized DNA base J and propagating J synthesis. Thymine dioxygenase activity and J-DNA-binding are independent functions.</text>
</comment>
<comment type="catalytic activity">
    <reaction evidence="2">
        <text>thymine + 2-oxoglutarate + O2 = 5-hydroxymethyluracil + succinate + CO2</text>
        <dbReference type="Rhea" id="RHEA:10316"/>
        <dbReference type="ChEBI" id="CHEBI:15379"/>
        <dbReference type="ChEBI" id="CHEBI:16526"/>
        <dbReference type="ChEBI" id="CHEBI:16810"/>
        <dbReference type="ChEBI" id="CHEBI:16964"/>
        <dbReference type="ChEBI" id="CHEBI:17821"/>
        <dbReference type="ChEBI" id="CHEBI:30031"/>
        <dbReference type="EC" id="1.14.11.6"/>
    </reaction>
</comment>
<comment type="cofactor">
    <cofactor evidence="1">
        <name>Fe(2+)</name>
        <dbReference type="ChEBI" id="CHEBI:29033"/>
    </cofactor>
    <text evidence="1">Binds 1 Fe(2+) ion per subunit.</text>
</comment>
<comment type="subunit">
    <text evidence="2">Monomer. Binds to DNA as a monomer (By similarity).</text>
</comment>
<comment type="subcellular location">
    <subcellularLocation>
        <location evidence="3">Nucleus</location>
    </subcellularLocation>
</comment>
<comment type="developmental stage">
    <text evidence="3">Expressed in bloodstream form and significantly less in procyclic form.</text>
</comment>
<comment type="domain">
    <text evidence="2">The DNA-binding JBP1 domain (DB-JBP1) is necessary and sufficient for binding to J-DNA.</text>
</comment>
<comment type="disruption phenotype">
    <text evidence="4">Does not affect growth, gene expression or the stability of some repetitive DNA sequences. The genome contains only about 5% of the wild-type level of J in their DNA. Cells lacking both JBP1 and JBP2 show a complete absence of base J.</text>
</comment>
<comment type="similarity">
    <text evidence="5">Belongs to the TET family. JBP1 subfamily.</text>
</comment>
<organism>
    <name type="scientific">Trypanosoma brucei brucei</name>
    <dbReference type="NCBI Taxonomy" id="5702"/>
    <lineage>
        <taxon>Eukaryota</taxon>
        <taxon>Discoba</taxon>
        <taxon>Euglenozoa</taxon>
        <taxon>Kinetoplastea</taxon>
        <taxon>Metakinetoplastina</taxon>
        <taxon>Trypanosomatida</taxon>
        <taxon>Trypanosomatidae</taxon>
        <taxon>Trypanosoma</taxon>
    </lineage>
</organism>
<feature type="chain" id="PRO_0000412184" description="Thymine dioxygenase JBP1">
    <location>
        <begin position="1"/>
        <end position="839"/>
    </location>
</feature>
<feature type="region of interest" description="Thymine dioxygenase" evidence="2">
    <location>
        <begin position="86"/>
        <end position="288"/>
    </location>
</feature>
<feature type="region of interest" description="DNA-binding JBP1 domain" evidence="2">
    <location>
        <begin position="415"/>
        <end position="583"/>
    </location>
</feature>
<feature type="binding site" evidence="1">
    <location>
        <position position="213"/>
    </location>
    <ligand>
        <name>Fe cation</name>
        <dbReference type="ChEBI" id="CHEBI:24875"/>
        <note>catalytic</note>
    </ligand>
</feature>
<feature type="binding site" evidence="1">
    <location>
        <position position="215"/>
    </location>
    <ligand>
        <name>Fe cation</name>
        <dbReference type="ChEBI" id="CHEBI:24875"/>
        <note>catalytic</note>
    </ligand>
</feature>
<feature type="binding site" evidence="1">
    <location>
        <position position="263"/>
    </location>
    <ligand>
        <name>Fe cation</name>
        <dbReference type="ChEBI" id="CHEBI:24875"/>
        <note>catalytic</note>
    </ligand>
</feature>
<feature type="binding site" evidence="1">
    <location>
        <position position="279"/>
    </location>
    <ligand>
        <name>2-oxoglutarate</name>
        <dbReference type="ChEBI" id="CHEBI:16810"/>
    </ligand>
</feature>
<feature type="site" description="Involved in J base recognition, conferring specificity towards J-DNA" evidence="2">
    <location>
        <position position="548"/>
    </location>
</feature>
<sequence length="839" mass="95230">MRRQVKKVLREKADDSMKPGWDVYQPSNDVVYAFNHYMQGSQIDAEAREKAEKAFQEAVKKHPFHNNADHAVDFHGTTVFRNAKGKVCGVLIPKALPSFATSMAADVLECAVARTSLRSALFGGVSPNSGIAGYFDYRGTPVELKCRKTSFTYEHTKEWRSVFPMIDYTSAIYKAALPDHWKAQDAAVPDVVRIHGSPFSTLTVNERFRTASHTDNGDFDNGYGVLAVLKGEYSGLSLALDDYGVCFNMQPTDVLLFDTHLFHSNTELEAKEANATWNRLSCVFYYRAALGEQPCVEEYRRRLKKAKEEKSTSLSFNHIEQKDNGENTNKPAPVYPVPLTPFSCAASAWALRGCAAAMLTRLHGLVRENASLMTELFGEPVEVADGLPRRAPEEIIPVHKHTNVQMHYLGGFSEKGDILNEAMNKRHYLDKENLQKMFGEEFVNIWTQSRTHWLQLVKKEWEHQKETNPTRTRFSWNNTSAMNFAFFDLCDVAKQLMCGAFGDREVNKKEEQSFWGMFAAHLDNACINEIGMLQGSMGMHKLNVKLKDYNFGGTRYLKDMPPEEQERRRRRRLEIEQARRRAPICNSESGDWLRNEAFDYQTEDVAVNYEREQWITPENNAKRFGFPERGVYGAEGAATGTISVLIVLPKPTNHRQKTCELPTSREADRIMKNPAAQRLLCAKPCNIGLSTSSNKSRTVLCGNIRIDKVFDGGSVGGKMYDFVIMRHLLAATTGEREPLECLVRWTSLARYCTFVVEVDLLDRHHYILKSEIGEEYSAVSEICFSALYSATYARDKVNLRTTPCLLSFIDKSGNMLESRFKFNGSPLNTVAFVVRRREK</sequence>
<evidence type="ECO:0000250" key="1">
    <source>
        <dbReference type="UniProtKB" id="Q6N021"/>
    </source>
</evidence>
<evidence type="ECO:0000250" key="2">
    <source>
        <dbReference type="UniProtKB" id="Q9U6M1"/>
    </source>
</evidence>
<evidence type="ECO:0000269" key="3">
    <source>
    </source>
</evidence>
<evidence type="ECO:0000269" key="4">
    <source>
    </source>
</evidence>
<evidence type="ECO:0000305" key="5"/>